<sequence>MNNTTEYIDALPLTDIEKAALPKSDIRAVHTALDGEHHPFSRDDDTPLGSVKARLEQAWPDSLAEGQLIKDDEGRTQLQAMPKATRSSMFPDPWRTNPVGRFWDRLRGREVAPRYLSRLTKEQQASEQKWRTVGTIRRYTLLLLTLAQTVVATWYMKTILPYQGWALINPADMFGQDVWVSFMQLLPYILQSGILLLFAVLFCWVSAGFWTALMGFLQLLMGRDKYSISASTVGDEALNPEHRTALIMPICNEDVDRVFAGLRATWESVKATGNAAHFDVYILSDSYNPDICVAEQKAWMELIAEVQGEGQIFYRRRRRRVKRKSGNIDDFCRRWGNQYSYMVVLDADSVMTGECLTGLVRLMEANPNAGIIQSSPKASGMDTLYARCQQFATRVYGPLFTAGLHFWQLGESHYWGHNAIIRVQPFIEHCALAPLPGEGSFAGSILSHDFVEAALMRRAGWGVWIAYDLPGSYEELPPNLLDELKRDRRWCHGNLMNFRLFLVKGMHPVHRAVFLTGVMSYLSAPLWFMFLALSTALQVVHALTEPQYFLQPRQLFPVWPQWRPELAIALFASTMILLFLPKLLSIILIWCKGSKEYGGFCRVTLSLLLEVLFSVLLAPVRMLFHTVFVVSAFLGWEVVWNSPQRDDDSTPWSEAFKRHGSQMLLGLVWAAGMAWLDLRFLFWLAPIVFSLILSPFVSVISSRSTMGLRTKRWKLFLIPEEYSPPQVLVDTDKYLVLNRSRSLDDGFIHAVFNPSFNALATAMATARHRASQVLEIARDRHVEQALNETPEKLNRDRRLVLLSDPITMARLHYRVWSAPERYSSWVNYYSTIKLNPLAIKSK</sequence>
<feature type="chain" id="PRO_1000064602" description="Glucans biosynthesis glucosyltransferase H">
    <location>
        <begin position="1"/>
        <end position="842"/>
    </location>
</feature>
<feature type="transmembrane region" description="Helical" evidence="1">
    <location>
        <begin position="141"/>
        <end position="161"/>
    </location>
</feature>
<feature type="transmembrane region" description="Helical" evidence="1">
    <location>
        <begin position="194"/>
        <end position="214"/>
    </location>
</feature>
<feature type="transmembrane region" description="Helical" evidence="1">
    <location>
        <begin position="513"/>
        <end position="533"/>
    </location>
</feature>
<feature type="transmembrane region" description="Helical" evidence="1">
    <location>
        <begin position="570"/>
        <end position="590"/>
    </location>
</feature>
<feature type="transmembrane region" description="Helical" evidence="1">
    <location>
        <begin position="615"/>
        <end position="635"/>
    </location>
</feature>
<feature type="transmembrane region" description="Helical" evidence="1">
    <location>
        <begin position="680"/>
        <end position="700"/>
    </location>
</feature>
<gene>
    <name evidence="1" type="primary">mdoH</name>
    <name evidence="1" type="synonym">opgH</name>
    <name type="ordered locus">Ent638_1565</name>
</gene>
<accession>A4W964</accession>
<protein>
    <recommendedName>
        <fullName evidence="1">Glucans biosynthesis glucosyltransferase H</fullName>
        <ecNumber evidence="1">2.4.1.-</ecNumber>
    </recommendedName>
</protein>
<reference key="1">
    <citation type="journal article" date="2010" name="PLoS Genet.">
        <title>Genome sequence of the plant growth promoting endophytic bacterium Enterobacter sp. 638.</title>
        <authorList>
            <person name="Taghavi S."/>
            <person name="van der Lelie D."/>
            <person name="Hoffman A."/>
            <person name="Zhang Y.B."/>
            <person name="Walla M.D."/>
            <person name="Vangronsveld J."/>
            <person name="Newman L."/>
            <person name="Monchy S."/>
        </authorList>
    </citation>
    <scope>NUCLEOTIDE SEQUENCE [LARGE SCALE GENOMIC DNA]</scope>
    <source>
        <strain>638</strain>
    </source>
</reference>
<proteinExistence type="inferred from homology"/>
<keyword id="KW-0997">Cell inner membrane</keyword>
<keyword id="KW-1003">Cell membrane</keyword>
<keyword id="KW-0328">Glycosyltransferase</keyword>
<keyword id="KW-0472">Membrane</keyword>
<keyword id="KW-0808">Transferase</keyword>
<keyword id="KW-0812">Transmembrane</keyword>
<keyword id="KW-1133">Transmembrane helix</keyword>
<dbReference type="EC" id="2.4.1.-" evidence="1"/>
<dbReference type="EMBL" id="CP000653">
    <property type="protein sequence ID" value="ABP60244.1"/>
    <property type="molecule type" value="Genomic_DNA"/>
</dbReference>
<dbReference type="RefSeq" id="WP_012016961.1">
    <property type="nucleotide sequence ID" value="NC_009436.1"/>
</dbReference>
<dbReference type="STRING" id="399742.Ent638_1565"/>
<dbReference type="CAZy" id="GT2">
    <property type="family name" value="Glycosyltransferase Family 2"/>
</dbReference>
<dbReference type="KEGG" id="ent:Ent638_1565"/>
<dbReference type="eggNOG" id="COG2943">
    <property type="taxonomic scope" value="Bacteria"/>
</dbReference>
<dbReference type="HOGENOM" id="CLU_015730_1_0_6"/>
<dbReference type="OrthoDB" id="9775281at2"/>
<dbReference type="UniPathway" id="UPA00637"/>
<dbReference type="Proteomes" id="UP000000230">
    <property type="component" value="Chromosome"/>
</dbReference>
<dbReference type="GO" id="GO:0005886">
    <property type="term" value="C:plasma membrane"/>
    <property type="evidence" value="ECO:0007669"/>
    <property type="project" value="UniProtKB-SubCell"/>
</dbReference>
<dbReference type="GO" id="GO:0016758">
    <property type="term" value="F:hexosyltransferase activity"/>
    <property type="evidence" value="ECO:0007669"/>
    <property type="project" value="UniProtKB-UniRule"/>
</dbReference>
<dbReference type="GO" id="GO:0009250">
    <property type="term" value="P:glucan biosynthetic process"/>
    <property type="evidence" value="ECO:0007669"/>
    <property type="project" value="UniProtKB-UniRule"/>
</dbReference>
<dbReference type="CDD" id="cd04191">
    <property type="entry name" value="Glucan_BSP_MdoH"/>
    <property type="match status" value="1"/>
</dbReference>
<dbReference type="FunFam" id="3.90.550.10:FF:000047">
    <property type="entry name" value="Glucans biosynthesis glucosyltransferase H"/>
    <property type="match status" value="1"/>
</dbReference>
<dbReference type="Gene3D" id="3.90.550.10">
    <property type="entry name" value="Spore Coat Polysaccharide Biosynthesis Protein SpsA, Chain A"/>
    <property type="match status" value="1"/>
</dbReference>
<dbReference type="HAMAP" id="MF_01072">
    <property type="entry name" value="MdoH_OpgH"/>
    <property type="match status" value="1"/>
</dbReference>
<dbReference type="InterPro" id="IPR023725">
    <property type="entry name" value="Glucans_biosynth_gluTrFase_H"/>
</dbReference>
<dbReference type="InterPro" id="IPR001173">
    <property type="entry name" value="Glyco_trans_2-like"/>
</dbReference>
<dbReference type="InterPro" id="IPR050321">
    <property type="entry name" value="Glycosyltr_2/OpgH_subfam"/>
</dbReference>
<dbReference type="InterPro" id="IPR029044">
    <property type="entry name" value="Nucleotide-diphossugar_trans"/>
</dbReference>
<dbReference type="NCBIfam" id="NF003955">
    <property type="entry name" value="PRK05454.1-1"/>
    <property type="match status" value="1"/>
</dbReference>
<dbReference type="NCBIfam" id="NF003958">
    <property type="entry name" value="PRK05454.2-1"/>
    <property type="match status" value="1"/>
</dbReference>
<dbReference type="NCBIfam" id="NF003962">
    <property type="entry name" value="PRK05454.2-5"/>
    <property type="match status" value="1"/>
</dbReference>
<dbReference type="PANTHER" id="PTHR43867">
    <property type="entry name" value="CELLULOSE SYNTHASE CATALYTIC SUBUNIT A [UDP-FORMING]"/>
    <property type="match status" value="1"/>
</dbReference>
<dbReference type="PANTHER" id="PTHR43867:SF5">
    <property type="entry name" value="GLUCANS BIOSYNTHESIS GLUCOSYLTRANSFERASE H"/>
    <property type="match status" value="1"/>
</dbReference>
<dbReference type="Pfam" id="PF00535">
    <property type="entry name" value="Glycos_transf_2"/>
    <property type="match status" value="1"/>
</dbReference>
<dbReference type="SUPFAM" id="SSF53448">
    <property type="entry name" value="Nucleotide-diphospho-sugar transferases"/>
    <property type="match status" value="1"/>
</dbReference>
<organism>
    <name type="scientific">Enterobacter sp. (strain 638)</name>
    <dbReference type="NCBI Taxonomy" id="399742"/>
    <lineage>
        <taxon>Bacteria</taxon>
        <taxon>Pseudomonadati</taxon>
        <taxon>Pseudomonadota</taxon>
        <taxon>Gammaproteobacteria</taxon>
        <taxon>Enterobacterales</taxon>
        <taxon>Enterobacteriaceae</taxon>
        <taxon>Enterobacter</taxon>
    </lineage>
</organism>
<comment type="function">
    <text evidence="1">Involved in the biosynthesis of osmoregulated periplasmic glucans (OPGs).</text>
</comment>
<comment type="pathway">
    <text evidence="1">Glycan metabolism; osmoregulated periplasmic glucan (OPG) biosynthesis.</text>
</comment>
<comment type="subcellular location">
    <subcellularLocation>
        <location evidence="1">Cell inner membrane</location>
        <topology evidence="1">Multi-pass membrane protein</topology>
    </subcellularLocation>
</comment>
<comment type="similarity">
    <text evidence="1">Belongs to the glycosyltransferase 2 family. OpgH subfamily.</text>
</comment>
<name>OPGH_ENT38</name>
<evidence type="ECO:0000255" key="1">
    <source>
        <dbReference type="HAMAP-Rule" id="MF_01072"/>
    </source>
</evidence>